<sequence length="227" mass="25363">MARGIFITATGTDIGKTYVTALIIKRLRETNINCGYYKAALSGAERRDGKLIAGDANYVYNIANIKGDPNDAVSYIFQQAVSPHLAAKLNNVEISMERIKKDFYSIKNKYDYITVEGSGGIVCPISTGKERIMLHNIIKIFKLPAIVVADAGLGTINSTILTLQYMKEKNISVKMILLNNYNHKDIIHIENKGYLSDNLLIPVYTCNKNANNLEIPVEKLIEIYEEI</sequence>
<evidence type="ECO:0000255" key="1">
    <source>
        <dbReference type="HAMAP-Rule" id="MF_00336"/>
    </source>
</evidence>
<reference key="1">
    <citation type="journal article" date="2007" name="PLoS ONE">
        <title>Analysis of the neurotoxin complex genes in Clostridium botulinum A1-A4 and B1 strains: BoNT/A3, /Ba4 and /B1 clusters are located within plasmids.</title>
        <authorList>
            <person name="Smith T.J."/>
            <person name="Hill K.K."/>
            <person name="Foley B.T."/>
            <person name="Detter J.C."/>
            <person name="Munk A.C."/>
            <person name="Bruce D.C."/>
            <person name="Doggett N.A."/>
            <person name="Smith L.A."/>
            <person name="Marks J.D."/>
            <person name="Xie G."/>
            <person name="Brettin T.S."/>
        </authorList>
    </citation>
    <scope>NUCLEOTIDE SEQUENCE [LARGE SCALE GENOMIC DNA]</scope>
    <source>
        <strain>ATCC 19397 / Type A</strain>
    </source>
</reference>
<organism>
    <name type="scientific">Clostridium botulinum (strain ATCC 19397 / Type A)</name>
    <dbReference type="NCBI Taxonomy" id="441770"/>
    <lineage>
        <taxon>Bacteria</taxon>
        <taxon>Bacillati</taxon>
        <taxon>Bacillota</taxon>
        <taxon>Clostridia</taxon>
        <taxon>Eubacteriales</taxon>
        <taxon>Clostridiaceae</taxon>
        <taxon>Clostridium</taxon>
    </lineage>
</organism>
<name>BIOD_CLOB1</name>
<proteinExistence type="inferred from homology"/>
<keyword id="KW-0067">ATP-binding</keyword>
<keyword id="KW-0093">Biotin biosynthesis</keyword>
<keyword id="KW-0963">Cytoplasm</keyword>
<keyword id="KW-0436">Ligase</keyword>
<keyword id="KW-0460">Magnesium</keyword>
<keyword id="KW-0479">Metal-binding</keyword>
<keyword id="KW-0547">Nucleotide-binding</keyword>
<protein>
    <recommendedName>
        <fullName evidence="1">ATP-dependent dethiobiotin synthetase BioD</fullName>
        <ecNumber evidence="1">6.3.3.3</ecNumber>
    </recommendedName>
    <alternativeName>
        <fullName evidence="1">DTB synthetase</fullName>
        <shortName evidence="1">DTBS</shortName>
    </alternativeName>
    <alternativeName>
        <fullName evidence="1">Dethiobiotin synthase</fullName>
    </alternativeName>
</protein>
<dbReference type="EC" id="6.3.3.3" evidence="1"/>
<dbReference type="EMBL" id="CP000726">
    <property type="protein sequence ID" value="ABS33109.1"/>
    <property type="molecule type" value="Genomic_DNA"/>
</dbReference>
<dbReference type="RefSeq" id="WP_011986727.1">
    <property type="nucleotide sequence ID" value="NC_009697.1"/>
</dbReference>
<dbReference type="SMR" id="A7FVS5"/>
<dbReference type="GeneID" id="5186513"/>
<dbReference type="KEGG" id="cba:CLB_2199"/>
<dbReference type="HOGENOM" id="CLU_072551_3_0_9"/>
<dbReference type="UniPathway" id="UPA00078">
    <property type="reaction ID" value="UER00161"/>
</dbReference>
<dbReference type="GO" id="GO:0005829">
    <property type="term" value="C:cytosol"/>
    <property type="evidence" value="ECO:0007669"/>
    <property type="project" value="TreeGrafter"/>
</dbReference>
<dbReference type="GO" id="GO:0005524">
    <property type="term" value="F:ATP binding"/>
    <property type="evidence" value="ECO:0007669"/>
    <property type="project" value="UniProtKB-UniRule"/>
</dbReference>
<dbReference type="GO" id="GO:0004141">
    <property type="term" value="F:dethiobiotin synthase activity"/>
    <property type="evidence" value="ECO:0007669"/>
    <property type="project" value="UniProtKB-UniRule"/>
</dbReference>
<dbReference type="GO" id="GO:0000287">
    <property type="term" value="F:magnesium ion binding"/>
    <property type="evidence" value="ECO:0007669"/>
    <property type="project" value="UniProtKB-UniRule"/>
</dbReference>
<dbReference type="GO" id="GO:0009102">
    <property type="term" value="P:biotin biosynthetic process"/>
    <property type="evidence" value="ECO:0007669"/>
    <property type="project" value="UniProtKB-UniRule"/>
</dbReference>
<dbReference type="CDD" id="cd03109">
    <property type="entry name" value="DTBS"/>
    <property type="match status" value="1"/>
</dbReference>
<dbReference type="FunFam" id="3.40.50.300:FF:003305">
    <property type="entry name" value="ATP-dependent dethiobiotin synthetase BioD"/>
    <property type="match status" value="1"/>
</dbReference>
<dbReference type="Gene3D" id="3.40.50.300">
    <property type="entry name" value="P-loop containing nucleotide triphosphate hydrolases"/>
    <property type="match status" value="1"/>
</dbReference>
<dbReference type="HAMAP" id="MF_00336">
    <property type="entry name" value="BioD"/>
    <property type="match status" value="1"/>
</dbReference>
<dbReference type="InterPro" id="IPR004472">
    <property type="entry name" value="DTB_synth_BioD"/>
</dbReference>
<dbReference type="InterPro" id="IPR027417">
    <property type="entry name" value="P-loop_NTPase"/>
</dbReference>
<dbReference type="NCBIfam" id="TIGR00347">
    <property type="entry name" value="bioD"/>
    <property type="match status" value="1"/>
</dbReference>
<dbReference type="PANTHER" id="PTHR43210:SF2">
    <property type="entry name" value="ATP-DEPENDENT DETHIOBIOTIN SYNTHETASE BIOD 2"/>
    <property type="match status" value="1"/>
</dbReference>
<dbReference type="PANTHER" id="PTHR43210">
    <property type="entry name" value="DETHIOBIOTIN SYNTHETASE"/>
    <property type="match status" value="1"/>
</dbReference>
<dbReference type="Pfam" id="PF13500">
    <property type="entry name" value="AAA_26"/>
    <property type="match status" value="1"/>
</dbReference>
<dbReference type="PIRSF" id="PIRSF006755">
    <property type="entry name" value="DTB_synth"/>
    <property type="match status" value="1"/>
</dbReference>
<dbReference type="SUPFAM" id="SSF52540">
    <property type="entry name" value="P-loop containing nucleoside triphosphate hydrolases"/>
    <property type="match status" value="1"/>
</dbReference>
<accession>A7FVS5</accession>
<comment type="function">
    <text evidence="1">Catalyzes a mechanistically unusual reaction, the ATP-dependent insertion of CO2 between the N7 and N8 nitrogen atoms of 7,8-diaminopelargonic acid (DAPA, also called 7,8-diammoniononanoate) to form a ureido ring.</text>
</comment>
<comment type="catalytic activity">
    <reaction evidence="1">
        <text>(7R,8S)-7,8-diammoniononanoate + CO2 + ATP = (4R,5S)-dethiobiotin + ADP + phosphate + 3 H(+)</text>
        <dbReference type="Rhea" id="RHEA:15805"/>
        <dbReference type="ChEBI" id="CHEBI:15378"/>
        <dbReference type="ChEBI" id="CHEBI:16526"/>
        <dbReference type="ChEBI" id="CHEBI:30616"/>
        <dbReference type="ChEBI" id="CHEBI:43474"/>
        <dbReference type="ChEBI" id="CHEBI:149469"/>
        <dbReference type="ChEBI" id="CHEBI:149473"/>
        <dbReference type="ChEBI" id="CHEBI:456216"/>
        <dbReference type="EC" id="6.3.3.3"/>
    </reaction>
</comment>
<comment type="cofactor">
    <cofactor evidence="1">
        <name>Mg(2+)</name>
        <dbReference type="ChEBI" id="CHEBI:18420"/>
    </cofactor>
</comment>
<comment type="pathway">
    <text evidence="1">Cofactor biosynthesis; biotin biosynthesis; biotin from 7,8-diaminononanoate: step 1/2.</text>
</comment>
<comment type="subunit">
    <text evidence="1">Homodimer.</text>
</comment>
<comment type="subcellular location">
    <subcellularLocation>
        <location evidence="1">Cytoplasm</location>
    </subcellularLocation>
</comment>
<comment type="similarity">
    <text evidence="1">Belongs to the dethiobiotin synthetase family.</text>
</comment>
<feature type="chain" id="PRO_1000019556" description="ATP-dependent dethiobiotin synthetase BioD">
    <location>
        <begin position="1"/>
        <end position="227"/>
    </location>
</feature>
<feature type="active site" evidence="1">
    <location>
        <position position="38"/>
    </location>
</feature>
<feature type="binding site" evidence="1">
    <location>
        <begin position="13"/>
        <end position="18"/>
    </location>
    <ligand>
        <name>ATP</name>
        <dbReference type="ChEBI" id="CHEBI:30616"/>
    </ligand>
</feature>
<feature type="binding site" evidence="1">
    <location>
        <position position="17"/>
    </location>
    <ligand>
        <name>Mg(2+)</name>
        <dbReference type="ChEBI" id="CHEBI:18420"/>
    </ligand>
</feature>
<feature type="binding site" evidence="1">
    <location>
        <position position="42"/>
    </location>
    <ligand>
        <name>substrate</name>
    </ligand>
</feature>
<feature type="binding site" evidence="1">
    <location>
        <position position="55"/>
    </location>
    <ligand>
        <name>ATP</name>
        <dbReference type="ChEBI" id="CHEBI:30616"/>
    </ligand>
</feature>
<feature type="binding site" evidence="1">
    <location>
        <position position="55"/>
    </location>
    <ligand>
        <name>Mg(2+)</name>
        <dbReference type="ChEBI" id="CHEBI:18420"/>
    </ligand>
</feature>
<feature type="binding site" evidence="1">
    <location>
        <begin position="116"/>
        <end position="119"/>
    </location>
    <ligand>
        <name>ATP</name>
        <dbReference type="ChEBI" id="CHEBI:30616"/>
    </ligand>
</feature>
<feature type="binding site" evidence="1">
    <location>
        <position position="116"/>
    </location>
    <ligand>
        <name>Mg(2+)</name>
        <dbReference type="ChEBI" id="CHEBI:18420"/>
    </ligand>
</feature>
<feature type="binding site" evidence="1">
    <location>
        <begin position="179"/>
        <end position="180"/>
    </location>
    <ligand>
        <name>ATP</name>
        <dbReference type="ChEBI" id="CHEBI:30616"/>
    </ligand>
</feature>
<gene>
    <name evidence="1" type="primary">bioD</name>
    <name type="ordered locus">CLB_2199</name>
</gene>